<accession>O90371</accession>
<feature type="chain" id="PRO_0000238760" description="Capsid protein" evidence="1">
    <location>
        <begin position="1"/>
        <end position="260"/>
    </location>
</feature>
<feature type="chain" id="PRO_0000238761" description="Precursor of protein E3/E2" evidence="1">
    <location>
        <begin position="261"/>
        <end position="747"/>
    </location>
</feature>
<feature type="chain" id="PRO_0000238762" description="Assembly protein E3" evidence="1">
    <location>
        <begin position="261"/>
        <end position="324"/>
    </location>
</feature>
<feature type="chain" id="PRO_0000238763" description="Spike glycoprotein E2" evidence="1">
    <location>
        <begin position="325"/>
        <end position="747"/>
    </location>
</feature>
<feature type="chain" id="PRO_0000238764" description="6K protein" evidence="1">
    <location>
        <begin position="748"/>
        <end position="808"/>
    </location>
</feature>
<feature type="chain" id="PRO_0000238765" description="Spike glycoprotein E1" evidence="1">
    <location>
        <begin position="809"/>
        <end position="1247"/>
    </location>
</feature>
<feature type="topological domain" description="Extracellular" evidence="12">
    <location>
        <begin position="325"/>
        <end position="691"/>
    </location>
</feature>
<feature type="transmembrane region" description="Helical" evidence="12">
    <location>
        <begin position="692"/>
        <end position="712"/>
    </location>
</feature>
<feature type="topological domain" description="Cytoplasmic" evidence="12">
    <location>
        <begin position="713"/>
        <end position="747"/>
    </location>
</feature>
<feature type="topological domain" description="Extracellular" evidence="12">
    <location>
        <begin position="748"/>
        <end position="762"/>
    </location>
</feature>
<feature type="transmembrane region" description="Helical" evidence="12">
    <location>
        <begin position="763"/>
        <end position="783"/>
    </location>
</feature>
<feature type="topological domain" description="Cytoplasmic" evidence="12">
    <location>
        <begin position="784"/>
        <end position="787"/>
    </location>
</feature>
<feature type="transmembrane region" description="Helical" evidence="12">
    <location>
        <begin position="788"/>
        <end position="808"/>
    </location>
</feature>
<feature type="topological domain" description="Extracellular" evidence="12">
    <location>
        <begin position="809"/>
        <end position="1223"/>
    </location>
</feature>
<feature type="transmembrane region" description="Helical" evidence="12">
    <location>
        <begin position="1224"/>
        <end position="1244"/>
    </location>
</feature>
<feature type="topological domain" description="Cytoplasmic" evidence="12">
    <location>
        <begin position="1245"/>
        <end position="1247"/>
    </location>
</feature>
<feature type="domain" description="Peptidase S3" evidence="13">
    <location>
        <begin position="112"/>
        <end position="260"/>
    </location>
</feature>
<feature type="region of interest" description="Host transcription inhibition" evidence="4">
    <location>
        <begin position="36"/>
        <end position="67"/>
    </location>
</feature>
<feature type="region of interest" description="Disordered" evidence="14">
    <location>
        <begin position="53"/>
        <end position="103"/>
    </location>
</feature>
<feature type="region of interest" description="Binding to the viral RNA" evidence="6">
    <location>
        <begin position="83"/>
        <end position="113"/>
    </location>
</feature>
<feature type="region of interest" description="Ribosome-binding" evidence="6">
    <location>
        <begin position="98"/>
        <end position="112"/>
    </location>
</feature>
<feature type="region of interest" description="Interaction with spike glycoprotein E2" evidence="3">
    <location>
        <begin position="154"/>
        <end position="159"/>
    </location>
</feature>
<feature type="region of interest" description="Dimerization of the capsid protein" evidence="5">
    <location>
        <begin position="182"/>
        <end position="192"/>
    </location>
</feature>
<feature type="region of interest" description="Dimerization of the capsid protein" evidence="5">
    <location>
        <begin position="218"/>
        <end position="222"/>
    </location>
</feature>
<feature type="region of interest" description="Functions as an uncleaved signal peptide for the precursor of protein E3/E2" evidence="2">
    <location>
        <begin position="261"/>
        <end position="273"/>
    </location>
</feature>
<feature type="region of interest" description="Interaction with the capsid protein" evidence="3">
    <location>
        <begin position="715"/>
        <end position="719"/>
    </location>
</feature>
<feature type="region of interest" description="Transient transmembrane before p62-6K protein processing" evidence="12">
    <location>
        <begin position="720"/>
        <end position="740"/>
    </location>
</feature>
<feature type="region of interest" description="E1 fusion peptide loop" evidence="11">
    <location>
        <begin position="892"/>
        <end position="909"/>
    </location>
</feature>
<feature type="short sequence motif" description="Nuclear localization signal" evidence="4">
    <location>
        <begin position="60"/>
        <end position="98"/>
    </location>
</feature>
<feature type="short sequence motif" description="Nuclear export signal" evidence="4">
    <location>
        <begin position="143"/>
        <end position="153"/>
    </location>
</feature>
<feature type="compositionally biased region" description="Basic residues" evidence="14">
    <location>
        <begin position="59"/>
        <end position="71"/>
    </location>
</feature>
<feature type="compositionally biased region" description="Basic residues" evidence="14">
    <location>
        <begin position="81"/>
        <end position="100"/>
    </location>
</feature>
<feature type="active site" description="Charge relay system" evidence="13">
    <location>
        <position position="138"/>
    </location>
</feature>
<feature type="active site" description="Charge relay system" evidence="13">
    <location>
        <position position="160"/>
    </location>
</feature>
<feature type="active site" description="Charge relay system" evidence="13">
    <location>
        <position position="212"/>
    </location>
</feature>
<feature type="site" description="Involved in dimerization of the capsid protein" evidence="10">
    <location>
        <position position="186"/>
    </location>
</feature>
<feature type="site" description="Involved in dimerization of the capsid protein" evidence="10">
    <location>
        <position position="219"/>
    </location>
</feature>
<feature type="site" description="Cleavage; by autolysis" evidence="2">
    <location>
        <begin position="260"/>
        <end position="261"/>
    </location>
</feature>
<feature type="site" description="Cleavage; by host furin" evidence="2">
    <location>
        <begin position="324"/>
        <end position="325"/>
    </location>
</feature>
<feature type="site" description="Cleavage; by host signal peptidase" evidence="2">
    <location>
        <begin position="747"/>
        <end position="748"/>
    </location>
</feature>
<feature type="site" description="Cleavage; by host signal peptidase" evidence="2">
    <location>
        <begin position="808"/>
        <end position="809"/>
    </location>
</feature>
<feature type="lipid moiety-binding region" description="S-palmitoyl cysteine; by host" evidence="3">
    <location>
        <position position="720"/>
    </location>
</feature>
<feature type="lipid moiety-binding region" description="S-palmitoyl cysteine; by host" evidence="9">
    <location>
        <position position="740"/>
    </location>
</feature>
<feature type="lipid moiety-binding region" description="S-palmitoyl cysteine; by host" evidence="9">
    <location>
        <position position="741"/>
    </location>
</feature>
<feature type="lipid moiety-binding region" description="S-palmitoyl cysteine; by host" evidence="9">
    <location>
        <position position="1241"/>
    </location>
</feature>
<feature type="glycosylation site" description="N-linked (GlcNAc...) asparagine; by host" evidence="12">
    <location>
        <position position="272"/>
    </location>
</feature>
<feature type="glycosylation site" description="N-linked (GlcNAc...) asparagine; by host" evidence="9">
    <location>
        <position position="587"/>
    </location>
</feature>
<feature type="glycosylation site" description="N-linked (GlcNAc...) asparagine; by host" evidence="9">
    <location>
        <position position="949"/>
    </location>
</feature>
<feature type="glycosylation site" description="N-linked (GlcNAc...) asparagine; by host" evidence="9">
    <location>
        <position position="1078"/>
    </location>
</feature>
<feature type="disulfide bond" evidence="2">
    <location>
        <begin position="112"/>
        <end position="127"/>
    </location>
</feature>
<feature type="disulfide bond" evidence="8">
    <location>
        <begin position="268"/>
        <end position="277"/>
    </location>
</feature>
<feature type="disulfide bond" evidence="8">
    <location>
        <begin position="282"/>
        <end position="286"/>
    </location>
</feature>
<feature type="disulfide bond" evidence="8">
    <location>
        <begin position="285"/>
        <end position="317"/>
    </location>
</feature>
<feature type="disulfide bond" evidence="8">
    <location>
        <begin position="343"/>
        <end position="449"/>
    </location>
</feature>
<feature type="disulfide bond" evidence="8">
    <location>
        <begin position="346"/>
        <end position="352"/>
    </location>
</feature>
<feature type="disulfide bond" evidence="8">
    <location>
        <begin position="415"/>
        <end position="429"/>
    </location>
</feature>
<feature type="disulfide bond" evidence="8">
    <location>
        <begin position="477"/>
        <end position="590"/>
    </location>
</feature>
<feature type="disulfide bond" evidence="8">
    <location>
        <begin position="525"/>
        <end position="549"/>
    </location>
</feature>
<feature type="disulfide bond" evidence="8">
    <location>
        <begin position="527"/>
        <end position="544"/>
    </location>
</feature>
<feature type="disulfide bond" evidence="8">
    <location>
        <begin position="720"/>
        <end position="741"/>
    </location>
</feature>
<feature type="disulfide bond" evidence="8">
    <location>
        <begin position="857"/>
        <end position="922"/>
    </location>
</feature>
<feature type="disulfide bond" evidence="8">
    <location>
        <begin position="870"/>
        <end position="902"/>
    </location>
</feature>
<feature type="disulfide bond" evidence="8">
    <location>
        <begin position="871"/>
        <end position="904"/>
    </location>
</feature>
<feature type="disulfide bond" evidence="8">
    <location>
        <begin position="876"/>
        <end position="886"/>
    </location>
</feature>
<feature type="disulfide bond" evidence="8">
    <location>
        <begin position="1067"/>
        <end position="1079"/>
    </location>
</feature>
<feature type="disulfide bond" evidence="8">
    <location>
        <begin position="1109"/>
        <end position="1184"/>
    </location>
</feature>
<feature type="disulfide bond" evidence="8">
    <location>
        <begin position="1114"/>
        <end position="1188"/>
    </location>
</feature>
<feature type="disulfide bond" evidence="8">
    <location>
        <begin position="1136"/>
        <end position="1178"/>
    </location>
</feature>
<organismHost>
    <name type="scientific">Anopheles</name>
    <dbReference type="NCBI Taxonomy" id="44482"/>
</organismHost>
<organismHost>
    <name type="scientific">Homo sapiens</name>
    <name type="common">Human</name>
    <dbReference type="NCBI Taxonomy" id="9606"/>
</organismHost>
<evidence type="ECO:0000250" key="1"/>
<evidence type="ECO:0000250" key="2">
    <source>
        <dbReference type="UniProtKB" id="P03315"/>
    </source>
</evidence>
<evidence type="ECO:0000250" key="3">
    <source>
        <dbReference type="UniProtKB" id="P03316"/>
    </source>
</evidence>
<evidence type="ECO:0000250" key="4">
    <source>
        <dbReference type="UniProtKB" id="P09592"/>
    </source>
</evidence>
<evidence type="ECO:0000250" key="5">
    <source>
        <dbReference type="UniProtKB" id="P0DOK1"/>
    </source>
</evidence>
<evidence type="ECO:0000250" key="6">
    <source>
        <dbReference type="UniProtKB" id="P27284"/>
    </source>
</evidence>
<evidence type="ECO:0000250" key="7">
    <source>
        <dbReference type="UniProtKB" id="Q5WQY5"/>
    </source>
</evidence>
<evidence type="ECO:0000250" key="8">
    <source>
        <dbReference type="UniProtKB" id="Q5XXP3"/>
    </source>
</evidence>
<evidence type="ECO:0000250" key="9">
    <source>
        <dbReference type="UniProtKB" id="Q5Y388"/>
    </source>
</evidence>
<evidence type="ECO:0000250" key="10">
    <source>
        <dbReference type="UniProtKB" id="Q86925"/>
    </source>
</evidence>
<evidence type="ECO:0000250" key="11">
    <source>
        <dbReference type="UniProtKB" id="Q8JUX5"/>
    </source>
</evidence>
<evidence type="ECO:0000255" key="12"/>
<evidence type="ECO:0000255" key="13">
    <source>
        <dbReference type="PROSITE-ProRule" id="PRU01027"/>
    </source>
</evidence>
<evidence type="ECO:0000256" key="14">
    <source>
        <dbReference type="SAM" id="MobiDB-lite"/>
    </source>
</evidence>
<evidence type="ECO:0000305" key="15"/>
<comment type="function">
    <molecule>Capsid protein</molecule>
    <text evidence="2 3 6">Forms an icosahedral capsid with a T=4 symmetry composed of 240 copies of the capsid protein surrounded by a lipid membrane through which penetrate 80 spikes composed of trimers of E1-E2 heterodimers (By similarity). The capsid protein binds to the viral RNA genome at a site adjacent to a ribosome binding site for viral genome translation following genome release (By similarity). Possesses a protease activity that results in its autocatalytic cleavage from the nascent structural protein (By similarity). Following its self-cleavage, the capsid protein transiently associates with ribosomes, and within several minutes the protein binds to viral RNA and rapidly assembles into icosahedric core particles (By similarity). The resulting nucleocapsid eventually associates with the cytoplasmic domain of the spike glycoprotein E2 at the cell membrane, leading to budding and formation of mature virions (By similarity). In case of infection, new virions attach to target cells and after clathrin-mediated endocytosis their membrane fuses with the host endosomal membrane (By similarity). This leads to the release of the nucleocapsid into the cytoplasm, followed by an uncoating event necessary for the genomic RNA to become accessible (By similarity). The uncoating might be triggered by the interaction of capsid proteins with ribosomes (By similarity). Binding of ribosomes would release the genomic RNA since the same region is genomic RNA-binding and ribosome-binding (By similarity). Specifically inhibits interleukin-1 receptor-associated kinase 1/IRAK1-dependent signaling during viral entry, representing a means by which the alphaviruses may evade innate immune detection and activation prior to viral gene expression (By similarity).</text>
</comment>
<comment type="function">
    <molecule>Assembly protein E3</molecule>
    <text evidence="2">Provides the signal sequence for the translocation of the precursor of protein E3/E2 to the host endoplasmic reticulum. Furin-cleaved E3 remains associated with spike glycoprotein E1 and mediates pH protection of the latter during the transport via the secretory pathway. After virion release from the host cell, the assembly protein E3 is gradually released in the extracellular space.</text>
</comment>
<comment type="function">
    <molecule>Spike glycoprotein E2</molecule>
    <text evidence="2 7">Plays a role in viral attachment to target host cell, by binding to the cell receptor MXRA8 (By similarity). Synthesized as a p62 precursor which is processed by furin at the cell membrane just before virion budding, giving rise to E2-E1 heterodimer. The p62-E1 heterodimer is stable, whereas E2-E1 is unstable and dissociate at low pH. p62 is processed at the last step, presumably to avoid E1 fusion activation before its final export to cell surface. E2 C-terminus contains a transitory transmembrane that would be disrupted by palmitoylation, resulting in reorientation of the C-terminal tail from lumenal to cytoplasmic side. This step is critical since E2 C-terminus is involved in budding by interacting with capsid proteins. This release of E2 C-terminus in cytoplasm occurs lately in protein export, and precludes premature assembly of particles at the endoplasmic reticulum membrane (By similarity).</text>
</comment>
<comment type="function">
    <molecule>6K protein</molecule>
    <text evidence="2 3">Acts as a viroporin that participates in virus glycoprotein processing and transport to the plasma membrane, cell permeabilization and budding of viral particles (By similarity). Disrupts the calcium homeostasis of the cell, probably at the endoplasmic reticulum level (By similarity). This leads to cytoplasmic calcium elevation (By similarity). Because of its lipophilic properties, the 6K protein is postulated to influence the selection of lipids that interact with the transmembrane domains of the glycoproteins, which, in turn, affects the deformability of the bilayer required for the extreme curvature that occurs as budding proceeds. Present in low amount in virions, about 3% compared to viral glycoproteins (By similarity).</text>
</comment>
<comment type="function">
    <molecule>Spike glycoprotein E1</molecule>
    <text evidence="2">Class II viral fusion protein. Fusion activity is inactive as long as E1 is bound to E2 in mature virion. After virus attachment to target cell via host MXRA8 and endocytosis, acidification of the endosome induce dissociation of E1/E2 heterodimer and concomitant trimerization of the E1 subunits. This E1 trimer is fusion active, and promotes release of viral nucleocapsid in cytoplasm after endosome and viral membrane fusion. Efficient fusion requires the presence of cholesterol and sphingolipid in the target membrane.</text>
</comment>
<comment type="catalytic activity">
    <reaction evidence="2">
        <text>Autocatalytic release of the core protein from the N-terminus of the togavirus structural polyprotein by hydrolysis of a -Trp-|-Ser- bond.</text>
        <dbReference type="EC" id="3.4.21.90"/>
    </reaction>
</comment>
<comment type="subunit">
    <molecule>Capsid protein</molecule>
    <text evidence="3 10 11">Homodimer (By similarity). Homomultimer (By similarity). Interacts with host karyopherin KPNA4; this interaction allows the nuclear import of the viral capsid protein (By similarity). Interacts with spike glycoprotein E2 (By similarity). Interacts with host IRAK1; the interaction leads to inhibition of IRAK1-dependent signaling (By similarity).</text>
</comment>
<comment type="subunit">
    <molecule>Precursor of protein E3/E2</molecule>
    <text evidence="2 3 5 11">The precursor of protein E3/E2 and E1 form a heterodimer shortly after synthesis (By similarity).</text>
</comment>
<comment type="subunit">
    <molecule>Spike glycoprotein E1</molecule>
    <text evidence="3 11">The precursor of protein E3/E2 and E1 form a heterodimer shortly after synthesis (By similarity). Processing of the precursor of protein E3/E2 into E2 and E3 results in a heterodimer of the spike glycoproteins E2 and E1 (By similarity). Spike at virion surface are constituted of three E2-E1 heterodimers (By similarity). After target cell attachment and endocytosis, E1 change conformation to form homotrimers (By similarity). Interacts with 6K protein (By similarity).</text>
</comment>
<comment type="subunit">
    <molecule>Spike glycoprotein E2</molecule>
    <text evidence="3 7">Interacts with spike glycoprotein E1 (By similarity). Processing of the precursor of protein E3/E2 into E2 and E3 results in a heterodimer of the spike glycoproteins E2 and E1 (By similarity). Spike at virion surface are constituted of a trimer of E2-E1 heterodimers (By similarity). Interacts with 6K protein (By similarity). Interacts with host MXRA8; this interaction mediates virus entry (By similarity).</text>
</comment>
<comment type="subunit">
    <molecule>6K protein</molecule>
    <text evidence="3 8">Oligomer (By similarity). Interacts with spike glycoprotein E1. Interacts with spike glycoprotein E2 (By similarity).</text>
</comment>
<comment type="subcellular location">
    <molecule>Capsid protein</molecule>
    <subcellularLocation>
        <location evidence="3">Virion</location>
    </subcellularLocation>
    <subcellularLocation>
        <location evidence="11">Host cytoplasm</location>
    </subcellularLocation>
    <subcellularLocation>
        <location evidence="3">Host cell membrane</location>
    </subcellularLocation>
    <subcellularLocation>
        <location evidence="11">Host nucleus</location>
    </subcellularLocation>
    <text evidence="11">Shuttles between the cytoplasm and the nucleus.</text>
</comment>
<comment type="subcellular location">
    <molecule>Spike glycoprotein E2</molecule>
    <subcellularLocation>
        <location evidence="11">Virion membrane</location>
        <topology evidence="12">Single-pass type I membrane protein</topology>
    </subcellularLocation>
    <subcellularLocation>
        <location evidence="3">Host cell membrane</location>
        <topology evidence="11">Single-pass type I membrane protein</topology>
    </subcellularLocation>
</comment>
<comment type="subcellular location">
    <molecule>6K protein</molecule>
    <subcellularLocation>
        <location evidence="3">Host cell membrane</location>
        <topology evidence="12">Multi-pass membrane protein</topology>
    </subcellularLocation>
    <subcellularLocation>
        <location evidence="3">Virion membrane</location>
        <topology evidence="12">Multi-pass membrane protein</topology>
    </subcellularLocation>
    <subcellularLocation>
        <location evidence="3">Host Golgi apparatus</location>
    </subcellularLocation>
    <subcellularLocation>
        <location>Host Golgi apparatus</location>
        <location>Host trans-Golgi network</location>
    </subcellularLocation>
    <subcellularLocation>
        <location evidence="3">Host endoplasmic reticulum</location>
    </subcellularLocation>
</comment>
<comment type="subcellular location">
    <molecule>Spike glycoprotein E1</molecule>
    <subcellularLocation>
        <location evidence="11">Virion membrane</location>
        <topology evidence="12">Single-pass type I membrane protein</topology>
    </subcellularLocation>
    <subcellularLocation>
        <location evidence="3 11">Host cell membrane</location>
        <topology evidence="12">Single-pass type I membrane protein</topology>
    </subcellularLocation>
</comment>
<comment type="domain">
    <molecule>Capsid protein</molecule>
    <text evidence="3 4">The very N-terminus also plays a role in the particle assembly process (By similarity). The N-terminus also contains a nuclear localization signal and a supra nuclear export signal (supraNES), which is an unusually strong NES that mediates host CRM1 binding in the absence of RanGTP and thus can bind CRM1, not only in the nucleus, but also in the cytoplasm (By similarity). The C-terminus functions as a protease during translation to cleave itself from the translating structural polyprotein (By similarity).</text>
</comment>
<comment type="domain">
    <text evidence="2">Structural polyprotein: As soon as the capsid protein has been autocleaved, an internal uncleaved signal peptide directs the remaining polyprotein to the endoplasmic reticulum.</text>
</comment>
<comment type="PTM">
    <text evidence="2">Structural polyprotein: Specific enzymatic cleavages in vivo yield mature proteins. Capsid protein is auto-cleaved during polyprotein translation, unmasking a signal peptide at the N-terminus of the precursor of E3/E2 (By similarity). The remaining polyprotein is then targeted to the host endoplasmic reticulum, where host signal peptidase cleaves it into pE2, 6K and E1 proteins. pE2 is further processed to mature E3 and E2 by host furin in trans-Golgi vesicle (By similarity).</text>
</comment>
<comment type="PTM">
    <molecule>Spike glycoprotein E2</molecule>
    <text evidence="2">Palmitoylated via thioester bonds. These palmitoylations may induce disruption of the C-terminus transmembrane. This would result in the reorientation of E2 C-terminus from lumenal to cytoplasmic side.</text>
</comment>
<comment type="PTM">
    <molecule>Spike glycoprotein E1</molecule>
    <text evidence="2">N-glycosylated.</text>
</comment>
<comment type="PTM">
    <molecule>Spike glycoprotein E2</molecule>
    <text evidence="2">N-glycosylated.</text>
</comment>
<comment type="PTM">
    <molecule>Assembly protein E3</molecule>
    <text evidence="2">N-glycosylated.</text>
</comment>
<comment type="PTM">
    <molecule>6K protein</molecule>
    <text evidence="2">Palmitoylated via thioester bonds.</text>
</comment>
<comment type="miscellaneous">
    <text evidence="15">Belongs to the Old World alphaviruses that usually cause fever, maculopapular rash, arthralgia and myalgia.</text>
</comment>
<comment type="miscellaneous">
    <text evidence="10">Structural polyprotein: Translated from a subgenomic RNA synthesized during togavirus replication.</text>
</comment>
<keyword id="KW-0167">Capsid protein</keyword>
<keyword id="KW-0165">Cleavage on pair of basic residues</keyword>
<keyword id="KW-1015">Disulfide bond</keyword>
<keyword id="KW-1170">Fusion of virus membrane with host endosomal membrane</keyword>
<keyword id="KW-1168">Fusion of virus membrane with host membrane</keyword>
<keyword id="KW-0325">Glycoprotein</keyword>
<keyword id="KW-1032">Host cell membrane</keyword>
<keyword id="KW-1035">Host cytoplasm</keyword>
<keyword id="KW-1038">Host endoplasmic reticulum</keyword>
<keyword id="KW-1040">Host Golgi apparatus</keyword>
<keyword id="KW-1043">Host membrane</keyword>
<keyword id="KW-1048">Host nucleus</keyword>
<keyword id="KW-0945">Host-virus interaction</keyword>
<keyword id="KW-0378">Hydrolase</keyword>
<keyword id="KW-0407">Ion channel</keyword>
<keyword id="KW-0406">Ion transport</keyword>
<keyword id="KW-0449">Lipoprotein</keyword>
<keyword id="KW-0472">Membrane</keyword>
<keyword id="KW-0564">Palmitate</keyword>
<keyword id="KW-0645">Protease</keyword>
<keyword id="KW-0694">RNA-binding</keyword>
<keyword id="KW-0720">Serine protease</keyword>
<keyword id="KW-1144">T=4 icosahedral capsid protein</keyword>
<keyword id="KW-0812">Transmembrane</keyword>
<keyword id="KW-1133">Transmembrane helix</keyword>
<keyword id="KW-0813">Transport</keyword>
<keyword id="KW-1161">Viral attachment to host cell</keyword>
<keyword id="KW-1234">Viral attachment to host entry receptor</keyword>
<keyword id="KW-1182">Viral ion channel</keyword>
<keyword id="KW-1162">Viral penetration into host cytoplasm</keyword>
<keyword id="KW-0946">Virion</keyword>
<keyword id="KW-1160">Virus entry into host cell</keyword>
<proteinExistence type="inferred from homology"/>
<organism>
    <name type="scientific">O'nyong-nyong virus (strain Igbo Ora)</name>
    <name type="common">ONNV</name>
    <name type="synonym">Igbo Ora virus</name>
    <dbReference type="NCBI Taxonomy" id="79899"/>
    <lineage>
        <taxon>Viruses</taxon>
        <taxon>Riboviria</taxon>
        <taxon>Orthornavirae</taxon>
        <taxon>Kitrinoviricota</taxon>
        <taxon>Alsuviricetes</taxon>
        <taxon>Martellivirales</taxon>
        <taxon>Togaviridae</taxon>
        <taxon>Alphavirus</taxon>
        <taxon>Onyong-nyong virus</taxon>
    </lineage>
</organism>
<sequence length="1247" mass="138123">MEFIPAQTYYNRRYQPRPWTQRPTIQVIRPKPRRRRPAGQLAQLISAVSRLALRTVPQKPRRTRKIKKQKQVKQEQQSTRNQKKKAPKQKQTQKKKRPGRRERMCMKIENDCIFEVKHEGKVTGYACLVGDKVMKPAHVKGTIDNADLAKLAFKRSSKYDLECAQIPVHMKSDASKFTHEKPEGYYNWHHGAVQYSGGRFTIPTGAGKPGDSGRPIFDNKGRVVAIVLGGANEGTRTALSVVTWNKDIVTKITPEGSVEWSLALPVMCLLANTTFPCSQPPCAPCCYEKKPEETLRMLEDNVMQPGYYQLLDSALACSQHRQRRNARENFNVYKVTRPYLAHCPDCGEGHSCHSPIALERIRSEATDGTLKIQVSLQIGIKTADSHDWTKLRYMDSHTPVDADRSGLFVRTSAPCTITGTMGHFILARCPKGETLTVGFVDSRRISHTCMHPFHHEPPLIGREKFHSRPQHGKELPCSTYVHTTAATTEEIEVHMPPDTPDYTLMTQQAGNVKITVDGQTVRYKCKCDGSNEGLITTDKVINNCKVDQCHTAVTNHKKWQYNSPLTPRNSEQGDRKGKIHIPFPLVNTTCRVPKARNPTVTYGKNRVTLLLYPDHPTLLSYRAMGRIPDYHEEWITSKKEISITVPAEGLEVTWGNNDPYKYWPQLSTNGTAHGHPHEIILYYYELYPTTTIAVLAAASIVVASLVGLSLGMCICARRRCITPYELTPGATIPFLLGILCCVKTAKAASYYEAATYLWNEQQPLFWLQLLIPLSAAIVVCNCLKLLPCCCKTLTFLAVMSIGARTVSAYEHATVIPNTVGVPYKTLVSRPGYSPMVLEMELQSVTLEPTLFLDYITCEYKTITPSPYVKCCGTAECKAKNLPDYNCKVFTGVYPFMWGGAYCFCDAENTQLSEAHVEKSESCKTEFASAYRAHTASVSAKLRVFYQGNNITVSAYANGDHAVTVKDAKFVIGPLSSAWSPFDNKIVVYKGEVYNMDYPPFGAGRPGQFGDIQSRTPDSKDVYANTQLILQRPAAGAIHVPYSQAPSGFKYWLKEKGASLQHTAPFGCQIATNPVRAVNCAVGNIPVSIDIPDAAFTRVTDAPSVTDMSCEVASCTHSSDFGGAAVIKYTASKKGKCAVHSLTNAVTIREPNVDVEGTAQLQIAFSTALASAEFKVQICSTQVHCSATCHPPKDHIVNYPSPHTTLGVQDISTTAMSWVQKITGGVGLVVAIAALILIIVLCVSFSRH</sequence>
<reference key="1">
    <citation type="journal article" date="1998" name="Virology">
        <title>Emergence of epidemic O'nyong-nyong fever in Uganda after a 35-year absence: genetic characterization of the virus.</title>
        <authorList>
            <person name="Lanciotti R.S."/>
            <person name="Ludwig M.L."/>
            <person name="Rwaguma E.B."/>
            <person name="Lutwama J.J."/>
            <person name="Kram T.M."/>
            <person name="Karabatsos N."/>
            <person name="Cropp B.C."/>
            <person name="Miller B.R."/>
        </authorList>
    </citation>
    <scope>NUCLEOTIDE SEQUENCE [GENOMIC RNA]</scope>
</reference>
<name>POLS_ONNVI</name>
<protein>
    <recommendedName>
        <fullName>Structural polyprotein</fullName>
    </recommendedName>
    <alternativeName>
        <fullName>p130</fullName>
    </alternativeName>
    <component>
        <recommendedName>
            <fullName>Capsid protein</fullName>
            <ecNumber evidence="2">3.4.21.90</ecNumber>
        </recommendedName>
        <alternativeName>
            <fullName>Coat protein</fullName>
            <shortName>C</shortName>
        </alternativeName>
    </component>
    <component>
        <recommendedName>
            <fullName>Precursor of protein E3/E2</fullName>
        </recommendedName>
        <alternativeName>
            <fullName>p62</fullName>
        </alternativeName>
        <alternativeName>
            <fullName>pE2</fullName>
        </alternativeName>
    </component>
    <component>
        <recommendedName>
            <fullName>Assembly protein E3</fullName>
        </recommendedName>
    </component>
    <component>
        <recommendedName>
            <fullName>Spike glycoprotein E2</fullName>
        </recommendedName>
        <alternativeName>
            <fullName>E2 envelope glycoprotein</fullName>
        </alternativeName>
    </component>
    <component>
        <recommendedName>
            <fullName>6K protein</fullName>
        </recommendedName>
    </component>
    <component>
        <recommendedName>
            <fullName>Spike glycoprotein E1</fullName>
        </recommendedName>
        <alternativeName>
            <fullName>E1 envelope glycoprotein</fullName>
        </alternativeName>
    </component>
</protein>
<dbReference type="EC" id="3.4.21.90" evidence="2"/>
<dbReference type="EMBL" id="AF079457">
    <property type="protein sequence ID" value="AAC97207.1"/>
    <property type="molecule type" value="Genomic_RNA"/>
</dbReference>
<dbReference type="BMRB" id="O90371"/>
<dbReference type="SMR" id="O90371"/>
<dbReference type="MEROPS" id="S03.001"/>
<dbReference type="Proteomes" id="UP000008382">
    <property type="component" value="Genome"/>
</dbReference>
<dbReference type="GO" id="GO:0030430">
    <property type="term" value="C:host cell cytoplasm"/>
    <property type="evidence" value="ECO:0007669"/>
    <property type="project" value="UniProtKB-SubCell"/>
</dbReference>
<dbReference type="GO" id="GO:0042025">
    <property type="term" value="C:host cell nucleus"/>
    <property type="evidence" value="ECO:0007669"/>
    <property type="project" value="UniProtKB-SubCell"/>
</dbReference>
<dbReference type="GO" id="GO:0020002">
    <property type="term" value="C:host cell plasma membrane"/>
    <property type="evidence" value="ECO:0007669"/>
    <property type="project" value="UniProtKB-SubCell"/>
</dbReference>
<dbReference type="GO" id="GO:0016020">
    <property type="term" value="C:membrane"/>
    <property type="evidence" value="ECO:0007669"/>
    <property type="project" value="UniProtKB-KW"/>
</dbReference>
<dbReference type="GO" id="GO:0039619">
    <property type="term" value="C:T=4 icosahedral viral capsid"/>
    <property type="evidence" value="ECO:0007669"/>
    <property type="project" value="UniProtKB-KW"/>
</dbReference>
<dbReference type="GO" id="GO:0055036">
    <property type="term" value="C:virion membrane"/>
    <property type="evidence" value="ECO:0007669"/>
    <property type="project" value="UniProtKB-SubCell"/>
</dbReference>
<dbReference type="GO" id="GO:0003723">
    <property type="term" value="F:RNA binding"/>
    <property type="evidence" value="ECO:0007669"/>
    <property type="project" value="UniProtKB-KW"/>
</dbReference>
<dbReference type="GO" id="GO:0004252">
    <property type="term" value="F:serine-type endopeptidase activity"/>
    <property type="evidence" value="ECO:0007669"/>
    <property type="project" value="InterPro"/>
</dbReference>
<dbReference type="GO" id="GO:0005198">
    <property type="term" value="F:structural molecule activity"/>
    <property type="evidence" value="ECO:0007669"/>
    <property type="project" value="InterPro"/>
</dbReference>
<dbReference type="GO" id="GO:0039654">
    <property type="term" value="P:fusion of virus membrane with host endosome membrane"/>
    <property type="evidence" value="ECO:0007669"/>
    <property type="project" value="UniProtKB-KW"/>
</dbReference>
<dbReference type="GO" id="GO:0006508">
    <property type="term" value="P:proteolysis"/>
    <property type="evidence" value="ECO:0007669"/>
    <property type="project" value="UniProtKB-KW"/>
</dbReference>
<dbReference type="GO" id="GO:0046718">
    <property type="term" value="P:symbiont entry into host cell"/>
    <property type="evidence" value="ECO:0007669"/>
    <property type="project" value="UniProtKB-KW"/>
</dbReference>
<dbReference type="GO" id="GO:0039722">
    <property type="term" value="P:symbiont-mediated suppression of host toll-like receptor signaling pathway"/>
    <property type="evidence" value="ECO:0000250"/>
    <property type="project" value="UniProtKB"/>
</dbReference>
<dbReference type="GO" id="GO:0019062">
    <property type="term" value="P:virion attachment to host cell"/>
    <property type="evidence" value="ECO:0007669"/>
    <property type="project" value="UniProtKB-KW"/>
</dbReference>
<dbReference type="FunFam" id="1.10.287.2230:FF:000001">
    <property type="entry name" value="Structural polyprotein"/>
    <property type="match status" value="1"/>
</dbReference>
<dbReference type="FunFam" id="2.40.10.10:FF:000076">
    <property type="entry name" value="Structural polyprotein"/>
    <property type="match status" value="1"/>
</dbReference>
<dbReference type="FunFam" id="2.60.40.350:FF:000002">
    <property type="entry name" value="Structural polyprotein"/>
    <property type="match status" value="1"/>
</dbReference>
<dbReference type="FunFam" id="2.60.98.10:FF:000002">
    <property type="entry name" value="Structural polyprotein"/>
    <property type="match status" value="1"/>
</dbReference>
<dbReference type="FunFam" id="2.60.98.10:FF:000003">
    <property type="entry name" value="Structural polyprotein"/>
    <property type="match status" value="1"/>
</dbReference>
<dbReference type="FunFam" id="2.60.98.10:FF:000004">
    <property type="entry name" value="Structural polyprotein"/>
    <property type="match status" value="1"/>
</dbReference>
<dbReference type="Gene3D" id="1.10.287.2230">
    <property type="match status" value="1"/>
</dbReference>
<dbReference type="Gene3D" id="2.60.40.350">
    <property type="match status" value="1"/>
</dbReference>
<dbReference type="Gene3D" id="2.60.40.3200">
    <property type="entry name" value="Alphavirus E2 glycoprotein, A domain"/>
    <property type="match status" value="1"/>
</dbReference>
<dbReference type="Gene3D" id="2.60.40.4310">
    <property type="entry name" value="Alphavirus E2 glycoprotein, domain B"/>
    <property type="match status" value="1"/>
</dbReference>
<dbReference type="Gene3D" id="2.60.40.2400">
    <property type="entry name" value="Alphavirus E2 glycoprotein, domain C"/>
    <property type="match status" value="1"/>
</dbReference>
<dbReference type="Gene3D" id="2.60.98.10">
    <property type="entry name" value="Tick-borne Encephalitis virus Glycoprotein, domain 1"/>
    <property type="match status" value="3"/>
</dbReference>
<dbReference type="Gene3D" id="2.40.10.10">
    <property type="entry name" value="Trypsin-like serine proteases"/>
    <property type="match status" value="2"/>
</dbReference>
<dbReference type="InterPro" id="IPR002548">
    <property type="entry name" value="Alpha_E1_glycop"/>
</dbReference>
<dbReference type="InterPro" id="IPR000936">
    <property type="entry name" value="Alpha_E2_glycop"/>
</dbReference>
<dbReference type="InterPro" id="IPR002533">
    <property type="entry name" value="Alpha_E3_glycop"/>
</dbReference>
<dbReference type="InterPro" id="IPR042304">
    <property type="entry name" value="Alphavir_E2_A"/>
</dbReference>
<dbReference type="InterPro" id="IPR042305">
    <property type="entry name" value="Alphavir_E2_B"/>
</dbReference>
<dbReference type="InterPro" id="IPR042306">
    <property type="entry name" value="Alphavir_E2_C"/>
</dbReference>
<dbReference type="InterPro" id="IPR000336">
    <property type="entry name" value="Flavivir/Alphavir_Ig-like_sf"/>
</dbReference>
<dbReference type="InterPro" id="IPR036253">
    <property type="entry name" value="Glycoprot_cen/dimer_sf"/>
</dbReference>
<dbReference type="InterPro" id="IPR038055">
    <property type="entry name" value="Glycoprot_E_dimer_dom"/>
</dbReference>
<dbReference type="InterPro" id="IPR014756">
    <property type="entry name" value="Ig_E-set"/>
</dbReference>
<dbReference type="InterPro" id="IPR009003">
    <property type="entry name" value="Peptidase_S1_PA"/>
</dbReference>
<dbReference type="InterPro" id="IPR043504">
    <property type="entry name" value="Peptidase_S1_PA_chymotrypsin"/>
</dbReference>
<dbReference type="InterPro" id="IPR000930">
    <property type="entry name" value="Peptidase_S3"/>
</dbReference>
<dbReference type="Pfam" id="PF01589">
    <property type="entry name" value="Alpha_E1_glycop"/>
    <property type="match status" value="1"/>
</dbReference>
<dbReference type="Pfam" id="PF00943">
    <property type="entry name" value="Alpha_E2_glycop"/>
    <property type="match status" value="1"/>
</dbReference>
<dbReference type="Pfam" id="PF01563">
    <property type="entry name" value="Alpha_E3_glycop"/>
    <property type="match status" value="1"/>
</dbReference>
<dbReference type="Pfam" id="PF00944">
    <property type="entry name" value="Peptidase_S3"/>
    <property type="match status" value="1"/>
</dbReference>
<dbReference type="PRINTS" id="PR00798">
    <property type="entry name" value="TOGAVIRIN"/>
</dbReference>
<dbReference type="SUPFAM" id="SSF81296">
    <property type="entry name" value="E set domains"/>
    <property type="match status" value="1"/>
</dbReference>
<dbReference type="SUPFAM" id="SSF50494">
    <property type="entry name" value="Trypsin-like serine proteases"/>
    <property type="match status" value="1"/>
</dbReference>
<dbReference type="SUPFAM" id="SSF56983">
    <property type="entry name" value="Viral glycoprotein, central and dimerisation domains"/>
    <property type="match status" value="1"/>
</dbReference>
<dbReference type="PROSITE" id="PS51690">
    <property type="entry name" value="ALPHAVIRUS_CP"/>
    <property type="match status" value="1"/>
</dbReference>